<gene>
    <name type="primary">yisR</name>
    <name type="synonym">yucF</name>
    <name type="synonym">yuxC</name>
    <name type="ordered locus">BSU10830</name>
</gene>
<name>YISR_BACSU</name>
<evidence type="ECO:0000255" key="1">
    <source>
        <dbReference type="PROSITE-ProRule" id="PRU00593"/>
    </source>
</evidence>
<evidence type="ECO:0000305" key="2"/>
<keyword id="KW-0238">DNA-binding</keyword>
<keyword id="KW-1185">Reference proteome</keyword>
<keyword id="KW-0804">Transcription</keyword>
<keyword id="KW-0805">Transcription regulation</keyword>
<organism>
    <name type="scientific">Bacillus subtilis (strain 168)</name>
    <dbReference type="NCBI Taxonomy" id="224308"/>
    <lineage>
        <taxon>Bacteria</taxon>
        <taxon>Bacillati</taxon>
        <taxon>Bacillota</taxon>
        <taxon>Bacilli</taxon>
        <taxon>Bacillales</taxon>
        <taxon>Bacillaceae</taxon>
        <taxon>Bacillus</taxon>
    </lineage>
</organism>
<dbReference type="EMBL" id="Y09476">
    <property type="protein sequence ID" value="CAA70646.1"/>
    <property type="molecule type" value="Genomic_DNA"/>
</dbReference>
<dbReference type="EMBL" id="Z93940">
    <property type="protein sequence ID" value="CAB07960.1"/>
    <property type="molecule type" value="Genomic_DNA"/>
</dbReference>
<dbReference type="EMBL" id="AL009126">
    <property type="protein sequence ID" value="CAB12922.1"/>
    <property type="molecule type" value="Genomic_DNA"/>
</dbReference>
<dbReference type="EMBL" id="L08822">
    <property type="status" value="NOT_ANNOTATED_CDS"/>
    <property type="molecule type" value="Unassigned_DNA"/>
</dbReference>
<dbReference type="PIR" id="A69838">
    <property type="entry name" value="A69838"/>
</dbReference>
<dbReference type="RefSeq" id="NP_388963.1">
    <property type="nucleotide sequence ID" value="NC_000964.3"/>
</dbReference>
<dbReference type="RefSeq" id="WP_009966961.1">
    <property type="nucleotide sequence ID" value="NZ_OZ025638.1"/>
</dbReference>
<dbReference type="SMR" id="P40331"/>
<dbReference type="FunCoup" id="P40331">
    <property type="interactions" value="30"/>
</dbReference>
<dbReference type="STRING" id="224308.BSU10830"/>
<dbReference type="PaxDb" id="224308-BSU10830"/>
<dbReference type="EnsemblBacteria" id="CAB12922">
    <property type="protein sequence ID" value="CAB12922"/>
    <property type="gene ID" value="BSU_10830"/>
</dbReference>
<dbReference type="GeneID" id="936352"/>
<dbReference type="KEGG" id="bsu:BSU10830"/>
<dbReference type="PATRIC" id="fig|224308.179.peg.1164"/>
<dbReference type="eggNOG" id="COG1917">
    <property type="taxonomic scope" value="Bacteria"/>
</dbReference>
<dbReference type="eggNOG" id="COG2207">
    <property type="taxonomic scope" value="Bacteria"/>
</dbReference>
<dbReference type="InParanoid" id="P40331"/>
<dbReference type="OrthoDB" id="192171at2"/>
<dbReference type="PhylomeDB" id="P40331"/>
<dbReference type="BioCyc" id="BSUB:BSU10830-MONOMER"/>
<dbReference type="Proteomes" id="UP000001570">
    <property type="component" value="Chromosome"/>
</dbReference>
<dbReference type="GO" id="GO:0003700">
    <property type="term" value="F:DNA-binding transcription factor activity"/>
    <property type="evidence" value="ECO:0007669"/>
    <property type="project" value="InterPro"/>
</dbReference>
<dbReference type="GO" id="GO:0043565">
    <property type="term" value="F:sequence-specific DNA binding"/>
    <property type="evidence" value="ECO:0007669"/>
    <property type="project" value="InterPro"/>
</dbReference>
<dbReference type="Gene3D" id="1.10.10.60">
    <property type="entry name" value="Homeodomain-like"/>
    <property type="match status" value="2"/>
</dbReference>
<dbReference type="InterPro" id="IPR003313">
    <property type="entry name" value="AraC-bd"/>
</dbReference>
<dbReference type="InterPro" id="IPR009057">
    <property type="entry name" value="Homeodomain-like_sf"/>
</dbReference>
<dbReference type="InterPro" id="IPR037923">
    <property type="entry name" value="HTH-like"/>
</dbReference>
<dbReference type="InterPro" id="IPR018060">
    <property type="entry name" value="HTH_AraC"/>
</dbReference>
<dbReference type="InterPro" id="IPR018062">
    <property type="entry name" value="HTH_AraC-typ_CS"/>
</dbReference>
<dbReference type="PANTHER" id="PTHR43280">
    <property type="entry name" value="ARAC-FAMILY TRANSCRIPTIONAL REGULATOR"/>
    <property type="match status" value="1"/>
</dbReference>
<dbReference type="PANTHER" id="PTHR43280:SF30">
    <property type="entry name" value="MMSAB OPERON REGULATORY PROTEIN"/>
    <property type="match status" value="1"/>
</dbReference>
<dbReference type="Pfam" id="PF02311">
    <property type="entry name" value="AraC_binding"/>
    <property type="match status" value="1"/>
</dbReference>
<dbReference type="Pfam" id="PF12833">
    <property type="entry name" value="HTH_18"/>
    <property type="match status" value="1"/>
</dbReference>
<dbReference type="SMART" id="SM00342">
    <property type="entry name" value="HTH_ARAC"/>
    <property type="match status" value="1"/>
</dbReference>
<dbReference type="SUPFAM" id="SSF46689">
    <property type="entry name" value="Homeodomain-like"/>
    <property type="match status" value="2"/>
</dbReference>
<dbReference type="SUPFAM" id="SSF51215">
    <property type="entry name" value="Regulatory protein AraC"/>
    <property type="match status" value="1"/>
</dbReference>
<dbReference type="PROSITE" id="PS00041">
    <property type="entry name" value="HTH_ARAC_FAMILY_1"/>
    <property type="match status" value="1"/>
</dbReference>
<dbReference type="PROSITE" id="PS01124">
    <property type="entry name" value="HTH_ARAC_FAMILY_2"/>
    <property type="match status" value="1"/>
</dbReference>
<accession>P40331</accession>
<accession>O07913</accession>
<protein>
    <recommendedName>
        <fullName>Uncharacterized HTH-type transcriptional regulator YisR</fullName>
    </recommendedName>
</protein>
<sequence>MPRILFTVPPFPVFIAAGEGVFKKGETHVKRVFSVFDLIYVKQGTLYITENETSFSVEGGEYILLSPGLEHYGTKGSDEATSYYWLHFDEHRYEFTAKGGSNWSELQQEKGSFEELARYGLALPRKGKVQRPQFMAQQFEKLIDYSAENSDLPLRKQILFEELMLHLQKEAFQIPSAKERVAWEAARYLQEHYKEKTTIKDLSLALHYHQDYVSRCMQQVLGVTPAQYTNRVRMTEAKRLLSSTNDKMGVIAETVGMEDPTYFSKLFKQIEGISPIEYRKIVSRKVQ</sequence>
<feature type="chain" id="PRO_0000194621" description="Uncharacterized HTH-type transcriptional regulator YisR">
    <location>
        <begin position="1"/>
        <end position="287"/>
    </location>
</feature>
<feature type="domain" description="HTH araC/xylS-type" evidence="1">
    <location>
        <begin position="183"/>
        <end position="281"/>
    </location>
</feature>
<feature type="DNA-binding region" description="H-T-H motif" evidence="1">
    <location>
        <begin position="200"/>
        <end position="221"/>
    </location>
</feature>
<feature type="DNA-binding region" description="H-T-H motif" evidence="1">
    <location>
        <begin position="248"/>
        <end position="271"/>
    </location>
</feature>
<reference key="1">
    <citation type="journal article" date="1997" name="Microbiology">
        <title>A Bacillus subtilis chromosome segment at the 100 degrees to 102 degrees position encoding 11 membrane proteins.</title>
        <authorList>
            <person name="Roche B."/>
            <person name="Autret S."/>
            <person name="Levine A."/>
            <person name="Vannier F."/>
            <person name="Medina N."/>
            <person name="Seror S.J."/>
        </authorList>
    </citation>
    <scope>NUCLEOTIDE SEQUENCE [GENOMIC DNA]</scope>
    <source>
        <strain>168</strain>
    </source>
</reference>
<reference key="2">
    <citation type="submission" date="1997-04" db="EMBL/GenBank/DDBJ databases">
        <title>Bacillus subtilis genome project, DNA sequence from yucA to yucH.</title>
        <authorList>
            <person name="Oudega B."/>
            <person name="Koningstein G."/>
            <person name="Duesterhoeft A."/>
        </authorList>
    </citation>
    <scope>NUCLEOTIDE SEQUENCE [GENOMIC DNA]</scope>
    <source>
        <strain>168</strain>
    </source>
</reference>
<reference key="3">
    <citation type="journal article" date="1997" name="Nature">
        <title>The complete genome sequence of the Gram-positive bacterium Bacillus subtilis.</title>
        <authorList>
            <person name="Kunst F."/>
            <person name="Ogasawara N."/>
            <person name="Moszer I."/>
            <person name="Albertini A.M."/>
            <person name="Alloni G."/>
            <person name="Azevedo V."/>
            <person name="Bertero M.G."/>
            <person name="Bessieres P."/>
            <person name="Bolotin A."/>
            <person name="Borchert S."/>
            <person name="Borriss R."/>
            <person name="Boursier L."/>
            <person name="Brans A."/>
            <person name="Braun M."/>
            <person name="Brignell S.C."/>
            <person name="Bron S."/>
            <person name="Brouillet S."/>
            <person name="Bruschi C.V."/>
            <person name="Caldwell B."/>
            <person name="Capuano V."/>
            <person name="Carter N.M."/>
            <person name="Choi S.-K."/>
            <person name="Codani J.-J."/>
            <person name="Connerton I.F."/>
            <person name="Cummings N.J."/>
            <person name="Daniel R.A."/>
            <person name="Denizot F."/>
            <person name="Devine K.M."/>
            <person name="Duesterhoeft A."/>
            <person name="Ehrlich S.D."/>
            <person name="Emmerson P.T."/>
            <person name="Entian K.-D."/>
            <person name="Errington J."/>
            <person name="Fabret C."/>
            <person name="Ferrari E."/>
            <person name="Foulger D."/>
            <person name="Fritz C."/>
            <person name="Fujita M."/>
            <person name="Fujita Y."/>
            <person name="Fuma S."/>
            <person name="Galizzi A."/>
            <person name="Galleron N."/>
            <person name="Ghim S.-Y."/>
            <person name="Glaser P."/>
            <person name="Goffeau A."/>
            <person name="Golightly E.J."/>
            <person name="Grandi G."/>
            <person name="Guiseppi G."/>
            <person name="Guy B.J."/>
            <person name="Haga K."/>
            <person name="Haiech J."/>
            <person name="Harwood C.R."/>
            <person name="Henaut A."/>
            <person name="Hilbert H."/>
            <person name="Holsappel S."/>
            <person name="Hosono S."/>
            <person name="Hullo M.-F."/>
            <person name="Itaya M."/>
            <person name="Jones L.-M."/>
            <person name="Joris B."/>
            <person name="Karamata D."/>
            <person name="Kasahara Y."/>
            <person name="Klaerr-Blanchard M."/>
            <person name="Klein C."/>
            <person name="Kobayashi Y."/>
            <person name="Koetter P."/>
            <person name="Koningstein G."/>
            <person name="Krogh S."/>
            <person name="Kumano M."/>
            <person name="Kurita K."/>
            <person name="Lapidus A."/>
            <person name="Lardinois S."/>
            <person name="Lauber J."/>
            <person name="Lazarevic V."/>
            <person name="Lee S.-M."/>
            <person name="Levine A."/>
            <person name="Liu H."/>
            <person name="Masuda S."/>
            <person name="Mauel C."/>
            <person name="Medigue C."/>
            <person name="Medina N."/>
            <person name="Mellado R.P."/>
            <person name="Mizuno M."/>
            <person name="Moestl D."/>
            <person name="Nakai S."/>
            <person name="Noback M."/>
            <person name="Noone D."/>
            <person name="O'Reilly M."/>
            <person name="Ogawa K."/>
            <person name="Ogiwara A."/>
            <person name="Oudega B."/>
            <person name="Park S.-H."/>
            <person name="Parro V."/>
            <person name="Pohl T.M."/>
            <person name="Portetelle D."/>
            <person name="Porwollik S."/>
            <person name="Prescott A.M."/>
            <person name="Presecan E."/>
            <person name="Pujic P."/>
            <person name="Purnelle B."/>
            <person name="Rapoport G."/>
            <person name="Rey M."/>
            <person name="Reynolds S."/>
            <person name="Rieger M."/>
            <person name="Rivolta C."/>
            <person name="Rocha E."/>
            <person name="Roche B."/>
            <person name="Rose M."/>
            <person name="Sadaie Y."/>
            <person name="Sato T."/>
            <person name="Scanlan E."/>
            <person name="Schleich S."/>
            <person name="Schroeter R."/>
            <person name="Scoffone F."/>
            <person name="Sekiguchi J."/>
            <person name="Sekowska A."/>
            <person name="Seror S.J."/>
            <person name="Serror P."/>
            <person name="Shin B.-S."/>
            <person name="Soldo B."/>
            <person name="Sorokin A."/>
            <person name="Tacconi E."/>
            <person name="Takagi T."/>
            <person name="Takahashi H."/>
            <person name="Takemaru K."/>
            <person name="Takeuchi M."/>
            <person name="Tamakoshi A."/>
            <person name="Tanaka T."/>
            <person name="Terpstra P."/>
            <person name="Tognoni A."/>
            <person name="Tosato V."/>
            <person name="Uchiyama S."/>
            <person name="Vandenbol M."/>
            <person name="Vannier F."/>
            <person name="Vassarotti A."/>
            <person name="Viari A."/>
            <person name="Wambutt R."/>
            <person name="Wedler E."/>
            <person name="Wedler H."/>
            <person name="Weitzenegger T."/>
            <person name="Winters P."/>
            <person name="Wipat A."/>
            <person name="Yamamoto H."/>
            <person name="Yamane K."/>
            <person name="Yasumoto K."/>
            <person name="Yata K."/>
            <person name="Yoshida K."/>
            <person name="Yoshikawa H.-F."/>
            <person name="Zumstein E."/>
            <person name="Yoshikawa H."/>
            <person name="Danchin A."/>
        </authorList>
    </citation>
    <scope>NUCLEOTIDE SEQUENCE [LARGE SCALE GENOMIC DNA]</scope>
    <source>
        <strain>168</strain>
    </source>
</reference>
<reference key="4">
    <citation type="journal article" date="1993" name="J. Bacteriol.">
        <title>The degA gene product accelerates degradation of Bacillus subtilis phosphoribosylpyrophosphate amidotransferase in Escherichia coli.</title>
        <authorList>
            <person name="Bussey L.B."/>
            <person name="Switzer R.L."/>
        </authorList>
    </citation>
    <scope>NUCLEOTIDE SEQUENCE [GENOMIC DNA] OF 92-287</scope>
    <source>
        <strain>168 / DB104</strain>
    </source>
</reference>
<comment type="sequence caution" evidence="2">
    <conflict type="frameshift">
        <sequence resource="EMBL" id="L08822"/>
    </conflict>
</comment>
<proteinExistence type="predicted"/>